<sequence length="417" mass="44319">MLRKLLIGTALATSFAFSAHAADVKEVQMLHWWTSGGEAAALNVLKGDLAKEGFAWKDVPVAGGGGDAAMTALKAMVAAGNYPTASQMLGYTVLDYAAAGVMGDLTETAKKEGWDKSVPAALQKFSVYEGKWVAAPVNVHSVNWLWINKAVMDKIGGTEPKTFDDFVALLDKAKAAGVIPLALGGQNWQEATMFDSVVLSTGGPEFYKKAFNDLDDASLKSDTMKKSFDNLAKLVTYVDPNFSGRDWNLATAMVIKGDALVQVMGDWAKGEFHAAKKTPGTDFLCYRFPGTDGSVIYNSDMFGMFNVPDDRKAAQVALATATLSKSFQSAFNVVKGSVPARTDVPDTDFDACGKKGIADLKKANEGGTLFGSLAQGYGAPPAVANAYKDVVSKFVHGQIKTSDEAVTELVKAIDDAK</sequence>
<gene>
    <name type="ordered locus">mlr3050</name>
</gene>
<comment type="function">
    <text evidence="2">Part of a binding-protein-dependent transport system for a sugar.</text>
</comment>
<comment type="subcellular location">
    <subcellularLocation>
        <location evidence="2">Periplasm</location>
    </subcellularLocation>
</comment>
<comment type="similarity">
    <text evidence="2">Belongs to the bacterial solute-binding protein 1 family.</text>
</comment>
<comment type="sequence caution" evidence="2">
    <conflict type="erroneous initiation">
        <sequence resource="EMBL-CDS" id="BAB50033"/>
    </conflict>
</comment>
<reference key="1">
    <citation type="journal article" date="2000" name="DNA Res.">
        <title>Complete genome structure of the nitrogen-fixing symbiotic bacterium Mesorhizobium loti.</title>
        <authorList>
            <person name="Kaneko T."/>
            <person name="Nakamura Y."/>
            <person name="Sato S."/>
            <person name="Asamizu E."/>
            <person name="Kato T."/>
            <person name="Sasamoto S."/>
            <person name="Watanabe A."/>
            <person name="Idesawa K."/>
            <person name="Ishikawa A."/>
            <person name="Kawashima K."/>
            <person name="Kimura T."/>
            <person name="Kishida Y."/>
            <person name="Kiyokawa C."/>
            <person name="Kohara M."/>
            <person name="Matsumoto M."/>
            <person name="Matsuno A."/>
            <person name="Mochizuki Y."/>
            <person name="Nakayama S."/>
            <person name="Nakazaki N."/>
            <person name="Shimpo S."/>
            <person name="Sugimoto M."/>
            <person name="Takeuchi C."/>
            <person name="Yamada M."/>
            <person name="Tabata S."/>
        </authorList>
    </citation>
    <scope>NUCLEOTIDE SEQUENCE [LARGE SCALE GENOMIC DNA]</scope>
    <source>
        <strain>LMG 29417 / CECT 9101 / MAFF 303099</strain>
    </source>
</reference>
<name>SP39_RHILO</name>
<dbReference type="EMBL" id="BA000012">
    <property type="protein sequence ID" value="BAB50033.1"/>
    <property type="status" value="ALT_INIT"/>
    <property type="molecule type" value="Genomic_DNA"/>
</dbReference>
<dbReference type="RefSeq" id="WP_044548311.1">
    <property type="nucleotide sequence ID" value="NC_002678.2"/>
</dbReference>
<dbReference type="SMR" id="Q98H33"/>
<dbReference type="KEGG" id="mlo:mlr3050"/>
<dbReference type="PATRIC" id="fig|266835.9.peg.2436"/>
<dbReference type="eggNOG" id="COG1653">
    <property type="taxonomic scope" value="Bacteria"/>
</dbReference>
<dbReference type="HOGENOM" id="CLU_031285_15_0_5"/>
<dbReference type="Proteomes" id="UP000000552">
    <property type="component" value="Chromosome"/>
</dbReference>
<dbReference type="GO" id="GO:0042597">
    <property type="term" value="C:periplasmic space"/>
    <property type="evidence" value="ECO:0007669"/>
    <property type="project" value="UniProtKB-SubCell"/>
</dbReference>
<dbReference type="Gene3D" id="3.40.190.10">
    <property type="entry name" value="Periplasmic binding protein-like II"/>
    <property type="match status" value="2"/>
</dbReference>
<dbReference type="InterPro" id="IPR050490">
    <property type="entry name" value="Bact_solute-bd_prot1"/>
</dbReference>
<dbReference type="InterPro" id="IPR006059">
    <property type="entry name" value="SBP"/>
</dbReference>
<dbReference type="PANTHER" id="PTHR43649">
    <property type="entry name" value="ARABINOSE-BINDING PROTEIN-RELATED"/>
    <property type="match status" value="1"/>
</dbReference>
<dbReference type="PANTHER" id="PTHR43649:SF28">
    <property type="entry name" value="BINDING PROTEIN COMPONENT OF ABC SUGAR TRANSPORTER-RELATED"/>
    <property type="match status" value="1"/>
</dbReference>
<dbReference type="Pfam" id="PF01547">
    <property type="entry name" value="SBP_bac_1"/>
    <property type="match status" value="1"/>
</dbReference>
<dbReference type="SUPFAM" id="SSF53850">
    <property type="entry name" value="Periplasmic binding protein-like II"/>
    <property type="match status" value="1"/>
</dbReference>
<evidence type="ECO:0000255" key="1"/>
<evidence type="ECO:0000305" key="2"/>
<accession>Q98H33</accession>
<organism>
    <name type="scientific">Mesorhizobium japonicum (strain LMG 29417 / CECT 9101 / MAFF 303099)</name>
    <name type="common">Mesorhizobium loti (strain MAFF 303099)</name>
    <dbReference type="NCBI Taxonomy" id="266835"/>
    <lineage>
        <taxon>Bacteria</taxon>
        <taxon>Pseudomonadati</taxon>
        <taxon>Pseudomonadota</taxon>
        <taxon>Alphaproteobacteria</taxon>
        <taxon>Hyphomicrobiales</taxon>
        <taxon>Phyllobacteriaceae</taxon>
        <taxon>Mesorhizobium</taxon>
    </lineage>
</organism>
<keyword id="KW-0574">Periplasm</keyword>
<keyword id="KW-0732">Signal</keyword>
<keyword id="KW-0762">Sugar transport</keyword>
<keyword id="KW-0813">Transport</keyword>
<proteinExistence type="inferred from homology"/>
<feature type="signal peptide" evidence="1">
    <location>
        <begin position="1"/>
        <end position="21"/>
    </location>
</feature>
<feature type="chain" id="PRO_0000031711" description="Probable sugar-binding periplasmic protein">
    <location>
        <begin position="22"/>
        <end position="417"/>
    </location>
</feature>
<protein>
    <recommendedName>
        <fullName>Probable sugar-binding periplasmic protein</fullName>
    </recommendedName>
</protein>